<protein>
    <recommendedName>
        <fullName evidence="1">Glutamine--fructose-6-phosphate aminotransferase [isomerizing]</fullName>
        <ecNumber evidence="1">2.6.1.16</ecNumber>
    </recommendedName>
    <alternativeName>
        <fullName evidence="1">D-fructose-6-phosphate amidotransferase</fullName>
    </alternativeName>
    <alternativeName>
        <fullName evidence="1">GFAT</fullName>
    </alternativeName>
    <alternativeName>
        <fullName evidence="1">Glucosamine-6-phosphate synthase</fullName>
    </alternativeName>
    <alternativeName>
        <fullName evidence="1">Hexosephosphate aminotransferase</fullName>
    </alternativeName>
    <alternativeName>
        <fullName evidence="1">L-glutamine--D-fructose-6-phosphate amidotransferase</fullName>
    </alternativeName>
</protein>
<name>GLMS_SALTY</name>
<keyword id="KW-0032">Aminotransferase</keyword>
<keyword id="KW-0963">Cytoplasm</keyword>
<keyword id="KW-0315">Glutamine amidotransferase</keyword>
<keyword id="KW-1185">Reference proteome</keyword>
<keyword id="KW-0677">Repeat</keyword>
<keyword id="KW-0808">Transferase</keyword>
<proteinExistence type="inferred from homology"/>
<organism>
    <name type="scientific">Salmonella typhimurium (strain LT2 / SGSC1412 / ATCC 700720)</name>
    <dbReference type="NCBI Taxonomy" id="99287"/>
    <lineage>
        <taxon>Bacteria</taxon>
        <taxon>Pseudomonadati</taxon>
        <taxon>Pseudomonadota</taxon>
        <taxon>Gammaproteobacteria</taxon>
        <taxon>Enterobacterales</taxon>
        <taxon>Enterobacteriaceae</taxon>
        <taxon>Salmonella</taxon>
    </lineage>
</organism>
<evidence type="ECO:0000255" key="1">
    <source>
        <dbReference type="HAMAP-Rule" id="MF_00164"/>
    </source>
</evidence>
<gene>
    <name evidence="1" type="primary">glmS</name>
    <name type="ordered locus">STM3861</name>
</gene>
<reference key="1">
    <citation type="journal article" date="2001" name="Nature">
        <title>Complete genome sequence of Salmonella enterica serovar Typhimurium LT2.</title>
        <authorList>
            <person name="McClelland M."/>
            <person name="Sanderson K.E."/>
            <person name="Spieth J."/>
            <person name="Clifton S.W."/>
            <person name="Latreille P."/>
            <person name="Courtney L."/>
            <person name="Porwollik S."/>
            <person name="Ali J."/>
            <person name="Dante M."/>
            <person name="Du F."/>
            <person name="Hou S."/>
            <person name="Layman D."/>
            <person name="Leonard S."/>
            <person name="Nguyen C."/>
            <person name="Scott K."/>
            <person name="Holmes A."/>
            <person name="Grewal N."/>
            <person name="Mulvaney E."/>
            <person name="Ryan E."/>
            <person name="Sun H."/>
            <person name="Florea L."/>
            <person name="Miller W."/>
            <person name="Stoneking T."/>
            <person name="Nhan M."/>
            <person name="Waterston R."/>
            <person name="Wilson R.K."/>
        </authorList>
    </citation>
    <scope>NUCLEOTIDE SEQUENCE [LARGE SCALE GENOMIC DNA]</scope>
    <source>
        <strain>LT2 / SGSC1412 / ATCC 700720</strain>
    </source>
</reference>
<comment type="function">
    <text evidence="1">Catalyzes the first step in hexosamine metabolism, converting fructose-6P into glucosamine-6P using glutamine as a nitrogen source.</text>
</comment>
<comment type="catalytic activity">
    <reaction evidence="1">
        <text>D-fructose 6-phosphate + L-glutamine = D-glucosamine 6-phosphate + L-glutamate</text>
        <dbReference type="Rhea" id="RHEA:13237"/>
        <dbReference type="ChEBI" id="CHEBI:29985"/>
        <dbReference type="ChEBI" id="CHEBI:58359"/>
        <dbReference type="ChEBI" id="CHEBI:58725"/>
        <dbReference type="ChEBI" id="CHEBI:61527"/>
        <dbReference type="EC" id="2.6.1.16"/>
    </reaction>
</comment>
<comment type="subunit">
    <text evidence="1">Homodimer.</text>
</comment>
<comment type="subcellular location">
    <subcellularLocation>
        <location evidence="1">Cytoplasm</location>
    </subcellularLocation>
</comment>
<accession>Q8ZKX1</accession>
<sequence>MCGIVGAIAQRDVAEILLEGLRRLEYRGYDSAGLAVVDAEGHMTRLRRLGKVQMLAQAAEEHPLHGGTGIAHTRWATHGEPSEANAHPHVSEHIVVVHNGIIENHEPLREALKARGYTFVSETDTEVIAHLVNWELKQGGTLREAVLRAIPQLRGAYGTVIMDTRHPDTLLAARSGSPLVIGLGMGENFIASDQLALLPVTRRFIFLEEGDIAEITRRSVNIFDNTGAEVKRQDIESNLQYDAGDKGIYRHYMQKEIYEQPNAIKNTLTGRISHGQVDLSELGPNADELLSKVEHIQILACGTSYNSGMVSRYWFESLAGIPCDVEIASEFRYRKSAVRRNSLMITLSQSGETADTLAGLRLSKELGYLGSLAICNVPGSSLVRESDLALMTNAGTEIGVASTKAFTTQLTVLLMLVAKLSRLKGLDASIEHDIVHGLQALPSRIEQMLSQDKRIELLAEDFSDKHHALFLGRGDQYPIALEGALKLKEISYIHAEAYAAGELKHGPLALIDADMPVIVVAPNNELLEKLKSNIEEVRARGGQLYVFADQDAGFVSNDNMHIIEMPHVEEVIAPIFYTVPLQLLAYHVALIKGTDVDQPRNLAKSVTVE</sequence>
<feature type="initiator methionine" description="Removed" evidence="1">
    <location>
        <position position="1"/>
    </location>
</feature>
<feature type="chain" id="PRO_0000135375" description="Glutamine--fructose-6-phosphate aminotransferase [isomerizing]">
    <location>
        <begin position="2"/>
        <end position="609"/>
    </location>
</feature>
<feature type="domain" description="Glutamine amidotransferase type-2" evidence="1">
    <location>
        <begin position="2"/>
        <end position="218"/>
    </location>
</feature>
<feature type="domain" description="SIS 1" evidence="1">
    <location>
        <begin position="286"/>
        <end position="426"/>
    </location>
</feature>
<feature type="domain" description="SIS 2" evidence="1">
    <location>
        <begin position="458"/>
        <end position="599"/>
    </location>
</feature>
<feature type="active site" description="Nucleophile; for GATase activity" evidence="1">
    <location>
        <position position="2"/>
    </location>
</feature>
<feature type="active site" description="For Fru-6P isomerization activity" evidence="1">
    <location>
        <position position="604"/>
    </location>
</feature>
<dbReference type="EC" id="2.6.1.16" evidence="1"/>
<dbReference type="EMBL" id="AE006468">
    <property type="protein sequence ID" value="AAL22719.1"/>
    <property type="molecule type" value="Genomic_DNA"/>
</dbReference>
<dbReference type="RefSeq" id="NP_462760.1">
    <property type="nucleotide sequence ID" value="NC_003197.2"/>
</dbReference>
<dbReference type="RefSeq" id="WP_000334066.1">
    <property type="nucleotide sequence ID" value="NC_003197.2"/>
</dbReference>
<dbReference type="SMR" id="Q8ZKX1"/>
<dbReference type="STRING" id="99287.STM3861"/>
<dbReference type="PaxDb" id="99287-STM3861"/>
<dbReference type="GeneID" id="1255388"/>
<dbReference type="KEGG" id="stm:STM3861"/>
<dbReference type="PATRIC" id="fig|99287.12.peg.4090"/>
<dbReference type="HOGENOM" id="CLU_012520_5_2_6"/>
<dbReference type="OMA" id="ASEYRYA"/>
<dbReference type="PhylomeDB" id="Q8ZKX1"/>
<dbReference type="BioCyc" id="SENT99287:STM3861-MONOMER"/>
<dbReference type="Proteomes" id="UP000001014">
    <property type="component" value="Chromosome"/>
</dbReference>
<dbReference type="GO" id="GO:0005829">
    <property type="term" value="C:cytosol"/>
    <property type="evidence" value="ECO:0000318"/>
    <property type="project" value="GO_Central"/>
</dbReference>
<dbReference type="GO" id="GO:0097367">
    <property type="term" value="F:carbohydrate derivative binding"/>
    <property type="evidence" value="ECO:0007669"/>
    <property type="project" value="InterPro"/>
</dbReference>
<dbReference type="GO" id="GO:0004360">
    <property type="term" value="F:glutamine-fructose-6-phosphate transaminase (isomerizing) activity"/>
    <property type="evidence" value="ECO:0000318"/>
    <property type="project" value="GO_Central"/>
</dbReference>
<dbReference type="GO" id="GO:0005975">
    <property type="term" value="P:carbohydrate metabolic process"/>
    <property type="evidence" value="ECO:0007669"/>
    <property type="project" value="UniProtKB-UniRule"/>
</dbReference>
<dbReference type="GO" id="GO:0006002">
    <property type="term" value="P:fructose 6-phosphate metabolic process"/>
    <property type="evidence" value="ECO:0000318"/>
    <property type="project" value="GO_Central"/>
</dbReference>
<dbReference type="GO" id="GO:0006487">
    <property type="term" value="P:protein N-linked glycosylation"/>
    <property type="evidence" value="ECO:0000318"/>
    <property type="project" value="GO_Central"/>
</dbReference>
<dbReference type="GO" id="GO:0006047">
    <property type="term" value="P:UDP-N-acetylglucosamine metabolic process"/>
    <property type="evidence" value="ECO:0000318"/>
    <property type="project" value="GO_Central"/>
</dbReference>
<dbReference type="CDD" id="cd00714">
    <property type="entry name" value="GFAT"/>
    <property type="match status" value="1"/>
</dbReference>
<dbReference type="CDD" id="cd05008">
    <property type="entry name" value="SIS_GlmS_GlmD_1"/>
    <property type="match status" value="1"/>
</dbReference>
<dbReference type="CDD" id="cd05009">
    <property type="entry name" value="SIS_GlmS_GlmD_2"/>
    <property type="match status" value="1"/>
</dbReference>
<dbReference type="FunFam" id="3.40.50.10490:FF:000001">
    <property type="entry name" value="Glutamine--fructose-6-phosphate aminotransferase [isomerizing]"/>
    <property type="match status" value="1"/>
</dbReference>
<dbReference type="FunFam" id="3.40.50.10490:FF:000002">
    <property type="entry name" value="Glutamine--fructose-6-phosphate aminotransferase [isomerizing]"/>
    <property type="match status" value="1"/>
</dbReference>
<dbReference type="FunFam" id="3.60.20.10:FF:000006">
    <property type="entry name" value="Glutamine--fructose-6-phosphate aminotransferase [isomerizing]"/>
    <property type="match status" value="1"/>
</dbReference>
<dbReference type="Gene3D" id="3.40.50.10490">
    <property type="entry name" value="Glucose-6-phosphate isomerase like protein, domain 1"/>
    <property type="match status" value="2"/>
</dbReference>
<dbReference type="Gene3D" id="3.60.20.10">
    <property type="entry name" value="Glutamine Phosphoribosylpyrophosphate, subunit 1, domain 1"/>
    <property type="match status" value="1"/>
</dbReference>
<dbReference type="HAMAP" id="MF_00164">
    <property type="entry name" value="GlmS"/>
    <property type="match status" value="1"/>
</dbReference>
<dbReference type="InterPro" id="IPR017932">
    <property type="entry name" value="GATase_2_dom"/>
</dbReference>
<dbReference type="InterPro" id="IPR005855">
    <property type="entry name" value="GFAT"/>
</dbReference>
<dbReference type="InterPro" id="IPR047084">
    <property type="entry name" value="GFAT_N"/>
</dbReference>
<dbReference type="InterPro" id="IPR035466">
    <property type="entry name" value="GlmS/AgaS_SIS"/>
</dbReference>
<dbReference type="InterPro" id="IPR035490">
    <property type="entry name" value="GlmS/FrlB_SIS"/>
</dbReference>
<dbReference type="InterPro" id="IPR029055">
    <property type="entry name" value="Ntn_hydrolases_N"/>
</dbReference>
<dbReference type="InterPro" id="IPR001347">
    <property type="entry name" value="SIS_dom"/>
</dbReference>
<dbReference type="InterPro" id="IPR046348">
    <property type="entry name" value="SIS_dom_sf"/>
</dbReference>
<dbReference type="NCBIfam" id="TIGR01135">
    <property type="entry name" value="glmS"/>
    <property type="match status" value="1"/>
</dbReference>
<dbReference type="NCBIfam" id="NF001484">
    <property type="entry name" value="PRK00331.1"/>
    <property type="match status" value="1"/>
</dbReference>
<dbReference type="PANTHER" id="PTHR10937">
    <property type="entry name" value="GLUCOSAMINE--FRUCTOSE-6-PHOSPHATE AMINOTRANSFERASE, ISOMERIZING"/>
    <property type="match status" value="1"/>
</dbReference>
<dbReference type="PANTHER" id="PTHR10937:SF0">
    <property type="entry name" value="GLUTAMINE--FRUCTOSE-6-PHOSPHATE TRANSAMINASE (ISOMERIZING)"/>
    <property type="match status" value="1"/>
</dbReference>
<dbReference type="Pfam" id="PF13522">
    <property type="entry name" value="GATase_6"/>
    <property type="match status" value="1"/>
</dbReference>
<dbReference type="Pfam" id="PF01380">
    <property type="entry name" value="SIS"/>
    <property type="match status" value="2"/>
</dbReference>
<dbReference type="SUPFAM" id="SSF56235">
    <property type="entry name" value="N-terminal nucleophile aminohydrolases (Ntn hydrolases)"/>
    <property type="match status" value="1"/>
</dbReference>
<dbReference type="SUPFAM" id="SSF53697">
    <property type="entry name" value="SIS domain"/>
    <property type="match status" value="1"/>
</dbReference>
<dbReference type="PROSITE" id="PS51278">
    <property type="entry name" value="GATASE_TYPE_2"/>
    <property type="match status" value="1"/>
</dbReference>
<dbReference type="PROSITE" id="PS51464">
    <property type="entry name" value="SIS"/>
    <property type="match status" value="2"/>
</dbReference>